<accession>Q22812</accession>
<name>HM39_CAEEL</name>
<comment type="function">
    <text evidence="4 5">Transcriptional regulator which is involved in the sex determination and X chromosome dosage compensation pathways (PubMed:17720939, PubMed:23666922). Directly binds to 5'-ATTGAT-3' sites in the promoter of sex-determining factor xol-1 to negatively regulate its expression and promote hermaphrodite development (PubMed:17720939, PubMed:23666922). Associates with condensed DNA during mitosis (PubMed:17720939).</text>
</comment>
<comment type="subcellular location">
    <subcellularLocation>
        <location evidence="1 2 4 7">Nucleus</location>
    </subcellularLocation>
    <subcellularLocation>
        <location evidence="4">Chromosome</location>
    </subcellularLocation>
    <text evidence="4">During mitosis, localizes to metaphase and anaphase chromosomes (PubMed:17720939). In the hermaphrodite gonads, localizes to the nucleus from late pachytene to diakinesis (PubMed:17720939). Localizes to condensed diakinetic chromosomes (PubMed:17720939).</text>
</comment>
<comment type="tissue specificity">
    <text evidence="4">Expressed in hermaphrodite gonads.</text>
</comment>
<comment type="developmental stage">
    <text evidence="4">Expressed in embryos (PubMed:17720939). First expressed in the 2 cell stage, with expression increasing at the 8-cell stage, but subsequently decreasing by the 150-cell stage and almost abolished by the 200-cell stage (PubMed:17720939).</text>
</comment>
<comment type="disruption phenotype">
    <text evidence="4">RNAi-mediated knockdown results in viable hermaphrodites as in wild-type.</text>
</comment>
<comment type="similarity">
    <text evidence="6">Belongs to the CUT homeobox family.</text>
</comment>
<reference key="1">
    <citation type="journal article" date="1998" name="Science">
        <title>Genome sequence of the nematode C. elegans: a platform for investigating biology.</title>
        <authorList>
            <consortium name="The C. elegans sequencing consortium"/>
        </authorList>
    </citation>
    <scope>NUCLEOTIDE SEQUENCE [LARGE SCALE GENOMIC DNA]</scope>
    <source>
        <strain>Bristol N2</strain>
    </source>
</reference>
<reference key="2">
    <citation type="journal article" date="2007" name="Genetics">
        <title>A ONECUT homeodomain protein communicates X chromosome dose to specify Caenorhabditis elegans sexual fate by repressing a sex switch gene.</title>
        <authorList>
            <person name="Gladden J.M."/>
            <person name="Meyer B.J."/>
        </authorList>
    </citation>
    <scope>FUNCTION</scope>
    <scope>SUBCELLULAR LOCATION</scope>
    <scope>TISSUE SPECIFICITY</scope>
    <scope>DEVELOPMENTAL STAGE</scope>
    <scope>DISRUPTION PHENOTYPE</scope>
    <scope>MUTAGENESIS OF 1-MET--LYS-102</scope>
</reference>
<reference key="3">
    <citation type="journal article" date="2013" name="Genes Dev.">
        <title>Molecular antagonism between X-chromosome and autosome signals determines nematode sex.</title>
        <authorList>
            <person name="Farboud B."/>
            <person name="Nix P."/>
            <person name="Jow M.M."/>
            <person name="Gladden J.M."/>
            <person name="Meyer B.J."/>
        </authorList>
    </citation>
    <scope>FUNCTION</scope>
    <scope>SUBCELLULAR LOCATION</scope>
</reference>
<gene>
    <name evidence="8" type="primary">ceh-39</name>
    <name evidence="8" type="ORF">T26C11.7</name>
</gene>
<evidence type="ECO:0000255" key="1">
    <source>
        <dbReference type="PROSITE-ProRule" id="PRU00108"/>
    </source>
</evidence>
<evidence type="ECO:0000255" key="2">
    <source>
        <dbReference type="PROSITE-ProRule" id="PRU00374"/>
    </source>
</evidence>
<evidence type="ECO:0000256" key="3">
    <source>
        <dbReference type="SAM" id="MobiDB-lite"/>
    </source>
</evidence>
<evidence type="ECO:0000269" key="4">
    <source>
    </source>
</evidence>
<evidence type="ECO:0000269" key="5">
    <source>
    </source>
</evidence>
<evidence type="ECO:0000305" key="6"/>
<evidence type="ECO:0000305" key="7">
    <source>
    </source>
</evidence>
<evidence type="ECO:0000312" key="8">
    <source>
        <dbReference type="WormBase" id="T26C11.7"/>
    </source>
</evidence>
<keyword id="KW-0158">Chromosome</keyword>
<keyword id="KW-0238">DNA-binding</keyword>
<keyword id="KW-0371">Homeobox</keyword>
<keyword id="KW-0539">Nucleus</keyword>
<keyword id="KW-1185">Reference proteome</keyword>
<keyword id="KW-0804">Transcription</keyword>
<keyword id="KW-0805">Transcription regulation</keyword>
<organism>
    <name type="scientific">Caenorhabditis elegans</name>
    <dbReference type="NCBI Taxonomy" id="6239"/>
    <lineage>
        <taxon>Eukaryota</taxon>
        <taxon>Metazoa</taxon>
        <taxon>Ecdysozoa</taxon>
        <taxon>Nematoda</taxon>
        <taxon>Chromadorea</taxon>
        <taxon>Rhabditida</taxon>
        <taxon>Rhabditina</taxon>
        <taxon>Rhabditomorpha</taxon>
        <taxon>Rhabditoidea</taxon>
        <taxon>Rhabditidae</taxon>
        <taxon>Peloderinae</taxon>
        <taxon>Caenorhabditis</taxon>
    </lineage>
</organism>
<feature type="chain" id="PRO_0000202410" description="Homeobox protein ceh-39">
    <location>
        <begin position="1"/>
        <end position="399"/>
    </location>
</feature>
<feature type="DNA-binding region" description="CUT" evidence="2">
    <location>
        <begin position="205"/>
        <end position="291"/>
    </location>
</feature>
<feature type="DNA-binding region" description="Homeobox" evidence="1">
    <location>
        <begin position="315"/>
        <end position="374"/>
    </location>
</feature>
<feature type="region of interest" description="Disordered" evidence="3">
    <location>
        <begin position="32"/>
        <end position="91"/>
    </location>
</feature>
<feature type="region of interest" description="Disordered" evidence="3">
    <location>
        <begin position="158"/>
        <end position="187"/>
    </location>
</feature>
<feature type="compositionally biased region" description="Low complexity" evidence="3">
    <location>
        <begin position="60"/>
        <end position="79"/>
    </location>
</feature>
<feature type="mutagenesis site" description="In y414; hermaphrodites are viable as in wild-type." evidence="4">
    <location>
        <begin position="1"/>
        <end position="102"/>
    </location>
</feature>
<proteinExistence type="evidence at protein level"/>
<dbReference type="EMBL" id="FO080541">
    <property type="protein sequence ID" value="CCD64529.1"/>
    <property type="molecule type" value="Genomic_DNA"/>
</dbReference>
<dbReference type="PIR" id="T28913">
    <property type="entry name" value="T28913"/>
</dbReference>
<dbReference type="RefSeq" id="NP_508342.1">
    <property type="nucleotide sequence ID" value="NM_075941.8"/>
</dbReference>
<dbReference type="SMR" id="Q22812"/>
<dbReference type="BioGRID" id="45452">
    <property type="interactions" value="2"/>
</dbReference>
<dbReference type="FunCoup" id="Q22812">
    <property type="interactions" value="103"/>
</dbReference>
<dbReference type="IntAct" id="Q22812">
    <property type="interactions" value="2"/>
</dbReference>
<dbReference type="STRING" id="6239.T26C11.7.2"/>
<dbReference type="PaxDb" id="6239-T26C11.7"/>
<dbReference type="EnsemblMetazoa" id="T26C11.7.1">
    <property type="protein sequence ID" value="T26C11.7.1"/>
    <property type="gene ID" value="WBGene00000460"/>
</dbReference>
<dbReference type="GeneID" id="180505"/>
<dbReference type="KEGG" id="cel:CELE_T26C11.7"/>
<dbReference type="UCSC" id="T26C11.7">
    <property type="organism name" value="c. elegans"/>
</dbReference>
<dbReference type="AGR" id="WB:WBGene00000460"/>
<dbReference type="CTD" id="180505"/>
<dbReference type="WormBase" id="T26C11.7">
    <property type="protein sequence ID" value="CE05026"/>
    <property type="gene ID" value="WBGene00000460"/>
    <property type="gene designation" value="ceh-39"/>
</dbReference>
<dbReference type="eggNOG" id="KOG2252">
    <property type="taxonomic scope" value="Eukaryota"/>
</dbReference>
<dbReference type="GeneTree" id="ENSGT00950000183103"/>
<dbReference type="HOGENOM" id="CLU_691242_0_0_1"/>
<dbReference type="InParanoid" id="Q22812"/>
<dbReference type="OrthoDB" id="10068888at2759"/>
<dbReference type="PhylomeDB" id="Q22812"/>
<dbReference type="PRO" id="PR:Q22812"/>
<dbReference type="Proteomes" id="UP000001940">
    <property type="component" value="Chromosome X"/>
</dbReference>
<dbReference type="Bgee" id="WBGene00000460">
    <property type="expression patterns" value="Expressed in embryo and 4 other cell types or tissues"/>
</dbReference>
<dbReference type="GO" id="GO:0000794">
    <property type="term" value="C:condensed nuclear chromosome"/>
    <property type="evidence" value="ECO:0000314"/>
    <property type="project" value="WormBase"/>
</dbReference>
<dbReference type="GO" id="GO:0043073">
    <property type="term" value="C:germ cell nucleus"/>
    <property type="evidence" value="ECO:0000314"/>
    <property type="project" value="WormBase"/>
</dbReference>
<dbReference type="GO" id="GO:0005634">
    <property type="term" value="C:nucleus"/>
    <property type="evidence" value="ECO:0000314"/>
    <property type="project" value="WormBase"/>
</dbReference>
<dbReference type="GO" id="GO:0000981">
    <property type="term" value="F:DNA-binding transcription factor activity, RNA polymerase II-specific"/>
    <property type="evidence" value="ECO:0000318"/>
    <property type="project" value="GO_Central"/>
</dbReference>
<dbReference type="GO" id="GO:0000978">
    <property type="term" value="F:RNA polymerase II cis-regulatory region sequence-specific DNA binding"/>
    <property type="evidence" value="ECO:0000318"/>
    <property type="project" value="GO_Central"/>
</dbReference>
<dbReference type="GO" id="GO:0000122">
    <property type="term" value="P:negative regulation of transcription by RNA polymerase II"/>
    <property type="evidence" value="ECO:0000315"/>
    <property type="project" value="WormBase"/>
</dbReference>
<dbReference type="GO" id="GO:0007538">
    <property type="term" value="P:primary sex determination"/>
    <property type="evidence" value="ECO:0000316"/>
    <property type="project" value="WormBase"/>
</dbReference>
<dbReference type="GO" id="GO:0006357">
    <property type="term" value="P:regulation of transcription by RNA polymerase II"/>
    <property type="evidence" value="ECO:0000318"/>
    <property type="project" value="GO_Central"/>
</dbReference>
<dbReference type="CDD" id="cd00086">
    <property type="entry name" value="homeodomain"/>
    <property type="match status" value="1"/>
</dbReference>
<dbReference type="FunFam" id="1.10.260.40:FF:000005">
    <property type="entry name" value="One cut domain family member"/>
    <property type="match status" value="1"/>
</dbReference>
<dbReference type="Gene3D" id="1.10.10.60">
    <property type="entry name" value="Homeodomain-like"/>
    <property type="match status" value="1"/>
</dbReference>
<dbReference type="Gene3D" id="1.10.260.40">
    <property type="entry name" value="lambda repressor-like DNA-binding domains"/>
    <property type="match status" value="1"/>
</dbReference>
<dbReference type="InterPro" id="IPR003350">
    <property type="entry name" value="CUT_dom"/>
</dbReference>
<dbReference type="InterPro" id="IPR051649">
    <property type="entry name" value="CUT_Homeobox"/>
</dbReference>
<dbReference type="InterPro" id="IPR001356">
    <property type="entry name" value="HD"/>
</dbReference>
<dbReference type="InterPro" id="IPR009057">
    <property type="entry name" value="Homeodomain-like_sf"/>
</dbReference>
<dbReference type="InterPro" id="IPR010982">
    <property type="entry name" value="Lambda_DNA-bd_dom_sf"/>
</dbReference>
<dbReference type="PANTHER" id="PTHR14057:SF32">
    <property type="entry name" value="HOMEOBOX PROTEIN CEH-21-RELATED"/>
    <property type="match status" value="1"/>
</dbReference>
<dbReference type="PANTHER" id="PTHR14057">
    <property type="entry name" value="TRANSCRIPTION FACTOR ONECUT"/>
    <property type="match status" value="1"/>
</dbReference>
<dbReference type="Pfam" id="PF02376">
    <property type="entry name" value="CUT"/>
    <property type="match status" value="1"/>
</dbReference>
<dbReference type="Pfam" id="PF00046">
    <property type="entry name" value="Homeodomain"/>
    <property type="match status" value="1"/>
</dbReference>
<dbReference type="SMART" id="SM01109">
    <property type="entry name" value="CUT"/>
    <property type="match status" value="1"/>
</dbReference>
<dbReference type="SMART" id="SM00389">
    <property type="entry name" value="HOX"/>
    <property type="match status" value="1"/>
</dbReference>
<dbReference type="SUPFAM" id="SSF46689">
    <property type="entry name" value="Homeodomain-like"/>
    <property type="match status" value="1"/>
</dbReference>
<dbReference type="SUPFAM" id="SSF47413">
    <property type="entry name" value="lambda repressor-like DNA-binding domains"/>
    <property type="match status" value="1"/>
</dbReference>
<dbReference type="PROSITE" id="PS51042">
    <property type="entry name" value="CUT"/>
    <property type="match status" value="1"/>
</dbReference>
<dbReference type="PROSITE" id="PS50071">
    <property type="entry name" value="HOMEOBOX_2"/>
    <property type="match status" value="1"/>
</dbReference>
<sequence>MDFSNTYRNYGEVVDFPEDFLSDYVPTVKSEPEPAAIAPSVCEPPISTTRNYGTDFGRASSMCGSSSSSSSSSYSSGSSPNYLTENGGDTEEPRFEELVSRKMSFDSENVAQVSNQMDYARDTYADSRIPFASIDSNDALLPYPVNNYVAALPVPVPAKKSRGRTAPRTPKSLETSKPGRGVKRPASKEIDAKDLGIGDLSAHMNRQIGDDEELDTQLIAHRILDELKEQCIPQASLAVKVLGRSQGTLSDLLRKPKPWGIMKNGRGTFQRMANWLDLDPVVRRALCFMKKEDVARITGMAEPTPAKRARQTTPSDERIRRFTFTQTQLDSLHTVFQQQDRPNREMQQALSATLKLNRSTVGNFFMNARRRLPKAAPVSQNLVAEHAIDHNQPGPSHHY</sequence>
<protein>
    <recommendedName>
        <fullName>Homeobox protein ceh-39</fullName>
    </recommendedName>
</protein>